<reference key="1">
    <citation type="submission" date="2006-11" db="EMBL/GenBank/DDBJ databases">
        <title>Identification and characterization of a new conjugation/ type IVA secretion system (trb/tra) of L. pneumophila Corby localized on a mobile genomic island.</title>
        <authorList>
            <person name="Gloeckner G."/>
            <person name="Albert-Weissenberger C."/>
            <person name="Weinmann E."/>
            <person name="Jacobi S."/>
            <person name="Schunder E."/>
            <person name="Steinert M."/>
            <person name="Buchrieser C."/>
            <person name="Hacker J."/>
            <person name="Heuner K."/>
        </authorList>
    </citation>
    <scope>NUCLEOTIDE SEQUENCE [LARGE SCALE GENOMIC DNA]</scope>
    <source>
        <strain>Corby</strain>
    </source>
</reference>
<comment type="similarity">
    <text evidence="1">Belongs to the UPF0178 family.</text>
</comment>
<evidence type="ECO:0000255" key="1">
    <source>
        <dbReference type="HAMAP-Rule" id="MF_00489"/>
    </source>
</evidence>
<protein>
    <recommendedName>
        <fullName evidence="1">UPF0178 protein LPC_0108</fullName>
    </recommendedName>
</protein>
<feature type="chain" id="PRO_1000014425" description="UPF0178 protein LPC_0108">
    <location>
        <begin position="1"/>
        <end position="148"/>
    </location>
</feature>
<accession>A5I9Q7</accession>
<proteinExistence type="inferred from homology"/>
<gene>
    <name type="ordered locus">LPC_0108</name>
</gene>
<name>Y108_LEGPC</name>
<organism>
    <name type="scientific">Legionella pneumophila (strain Corby)</name>
    <dbReference type="NCBI Taxonomy" id="400673"/>
    <lineage>
        <taxon>Bacteria</taxon>
        <taxon>Pseudomonadati</taxon>
        <taxon>Pseudomonadota</taxon>
        <taxon>Gammaproteobacteria</taxon>
        <taxon>Legionellales</taxon>
        <taxon>Legionellaceae</taxon>
        <taxon>Legionella</taxon>
    </lineage>
</organism>
<dbReference type="EMBL" id="CP000675">
    <property type="protein sequence ID" value="ABQ54107.1"/>
    <property type="molecule type" value="Genomic_DNA"/>
</dbReference>
<dbReference type="RefSeq" id="WP_011945290.1">
    <property type="nucleotide sequence ID" value="NZ_JAPMSS010000003.1"/>
</dbReference>
<dbReference type="KEGG" id="lpc:LPC_0108"/>
<dbReference type="HOGENOM" id="CLU_106619_2_1_6"/>
<dbReference type="CDD" id="cd18720">
    <property type="entry name" value="PIN_YqxD-like"/>
    <property type="match status" value="1"/>
</dbReference>
<dbReference type="HAMAP" id="MF_00489">
    <property type="entry name" value="UPF0178"/>
    <property type="match status" value="1"/>
</dbReference>
<dbReference type="InterPro" id="IPR003791">
    <property type="entry name" value="UPF0178"/>
</dbReference>
<dbReference type="NCBIfam" id="NF001095">
    <property type="entry name" value="PRK00124.1"/>
    <property type="match status" value="1"/>
</dbReference>
<dbReference type="PANTHER" id="PTHR35146">
    <property type="entry name" value="UPF0178 PROTEIN YAII"/>
    <property type="match status" value="1"/>
</dbReference>
<dbReference type="PANTHER" id="PTHR35146:SF1">
    <property type="entry name" value="UPF0178 PROTEIN YAII"/>
    <property type="match status" value="1"/>
</dbReference>
<dbReference type="Pfam" id="PF02639">
    <property type="entry name" value="DUF188"/>
    <property type="match status" value="1"/>
</dbReference>
<sequence>MTIWVDADACPKMIKDILFRAAIRTNTNLILVANSYLTYPNSPFIRSVLVEKGYDRADHYITSHMKAKDLVITADIPLAAEVIVKQGLAMSPRGELFTANNIKQRLTLRDINEQLRSAGERTGGPSALSAKEKTNFANALDRWLVKSK</sequence>